<keyword id="KW-0878">Amphibian defense peptide</keyword>
<keyword id="KW-0903">Direct protein sequencing</keyword>
<keyword id="KW-0964">Secreted</keyword>
<name>DAH43_RANDH</name>
<reference evidence="2" key="1">
    <citation type="journal article" date="2001" name="Rapid Commun. Mass Spectrom.">
        <title>Bioactive dahlein peptides from the skin secretions of the Australian aquatic frog Litoria dahlii: sequence determination by electrospray mass spectrometry.</title>
        <authorList>
            <person name="Wegener K.L."/>
            <person name="Brinkworth C.S."/>
            <person name="Bowie J.H."/>
            <person name="Wallace J.C."/>
            <person name="Tyler M.J."/>
        </authorList>
    </citation>
    <scope>PROTEIN SEQUENCE</scope>
    <scope>FUNCTION</scope>
    <scope>SUBCELLULAR LOCATION</scope>
    <scope>TISSUE SPECIFICITY</scope>
    <scope>MASS SPECTROMETRY</scope>
    <source>
        <tissue evidence="1">Skin secretion</tissue>
    </source>
</reference>
<sequence>GLWQLIKDKFKDAATGFVTGIQS</sequence>
<comment type="function">
    <text evidence="1">Has no antimicrobial activity.</text>
</comment>
<comment type="subcellular location">
    <subcellularLocation>
        <location evidence="1">Secreted</location>
    </subcellularLocation>
</comment>
<comment type="tissue specificity">
    <text evidence="1">Expressed by the skin dorsal glands.</text>
</comment>
<comment type="mass spectrometry"/>
<proteinExistence type="evidence at protein level"/>
<evidence type="ECO:0000269" key="1">
    <source>
    </source>
</evidence>
<evidence type="ECO:0000305" key="2"/>
<accession>P84266</accession>
<protein>
    <recommendedName>
        <fullName>Dahlein-4.3</fullName>
    </recommendedName>
</protein>
<organism>
    <name type="scientific">Ranoidea dahlii</name>
    <name type="common">Dahl's aquatic frog</name>
    <name type="synonym">Litoria dahlii</name>
    <dbReference type="NCBI Taxonomy" id="299727"/>
    <lineage>
        <taxon>Eukaryota</taxon>
        <taxon>Metazoa</taxon>
        <taxon>Chordata</taxon>
        <taxon>Craniata</taxon>
        <taxon>Vertebrata</taxon>
        <taxon>Euteleostomi</taxon>
        <taxon>Amphibia</taxon>
        <taxon>Batrachia</taxon>
        <taxon>Anura</taxon>
        <taxon>Neobatrachia</taxon>
        <taxon>Hyloidea</taxon>
        <taxon>Hylidae</taxon>
        <taxon>Pelodryadinae</taxon>
        <taxon>Ranoidea</taxon>
    </lineage>
</organism>
<dbReference type="GO" id="GO:0005576">
    <property type="term" value="C:extracellular region"/>
    <property type="evidence" value="ECO:0000314"/>
    <property type="project" value="UniProtKB"/>
</dbReference>
<dbReference type="GO" id="GO:0006952">
    <property type="term" value="P:defense response"/>
    <property type="evidence" value="ECO:0007669"/>
    <property type="project" value="UniProtKB-KW"/>
</dbReference>
<feature type="peptide" id="PRO_0000043776" description="Dahlein-4.3">
    <location>
        <begin position="1"/>
        <end position="23"/>
    </location>
</feature>